<comment type="function">
    <text evidence="1">Chaperone involved in the correct folding and assembly of outer membrane proteins. Recognizes specific patterns of aromatic residues and the orientation of their side chains, which are found more frequently in integral outer membrane proteins. May act in both early periplasmic and late outer membrane-associated steps of protein maturation.</text>
</comment>
<comment type="catalytic activity">
    <reaction evidence="1">
        <text>[protein]-peptidylproline (omega=180) = [protein]-peptidylproline (omega=0)</text>
        <dbReference type="Rhea" id="RHEA:16237"/>
        <dbReference type="Rhea" id="RHEA-COMP:10747"/>
        <dbReference type="Rhea" id="RHEA-COMP:10748"/>
        <dbReference type="ChEBI" id="CHEBI:83833"/>
        <dbReference type="ChEBI" id="CHEBI:83834"/>
        <dbReference type="EC" id="5.2.1.8"/>
    </reaction>
</comment>
<comment type="subcellular location">
    <subcellularLocation>
        <location evidence="1">Periplasm</location>
    </subcellularLocation>
    <text evidence="1">Is capable of associating with the outer membrane.</text>
</comment>
<comment type="domain">
    <text evidence="1">The PPIase activity resides only in the second parvulin domain. The N-terminal region and the C-terminal tail are necessary and sufficient for the chaperone activity of SurA. The PPIase activity is dispensable for SurA to function as a chaperone. The N-terminal region and the C-terminal tail are also required for porin recognition.</text>
</comment>
<organism>
    <name type="scientific">Burkholderia mallei (strain ATCC 23344)</name>
    <dbReference type="NCBI Taxonomy" id="243160"/>
    <lineage>
        <taxon>Bacteria</taxon>
        <taxon>Pseudomonadati</taxon>
        <taxon>Pseudomonadota</taxon>
        <taxon>Betaproteobacteria</taxon>
        <taxon>Burkholderiales</taxon>
        <taxon>Burkholderiaceae</taxon>
        <taxon>Burkholderia</taxon>
        <taxon>pseudomallei group</taxon>
    </lineage>
</organism>
<feature type="signal peptide" evidence="1">
    <location>
        <begin position="1"/>
        <end position="27"/>
    </location>
</feature>
<feature type="chain" id="PRO_0000270005" description="Chaperone SurA">
    <location>
        <begin position="28"/>
        <end position="448"/>
    </location>
</feature>
<feature type="domain" description="PpiC 1" evidence="1">
    <location>
        <begin position="185"/>
        <end position="288"/>
    </location>
</feature>
<feature type="domain" description="PpiC 2" evidence="1">
    <location>
        <begin position="301"/>
        <end position="399"/>
    </location>
</feature>
<dbReference type="EC" id="5.2.1.8" evidence="1"/>
<dbReference type="EMBL" id="CP000010">
    <property type="protein sequence ID" value="AAU49032.1"/>
    <property type="molecule type" value="Genomic_DNA"/>
</dbReference>
<dbReference type="RefSeq" id="WP_004189334.1">
    <property type="nucleotide sequence ID" value="NC_006348.1"/>
</dbReference>
<dbReference type="RefSeq" id="YP_102044.1">
    <property type="nucleotide sequence ID" value="NC_006348.1"/>
</dbReference>
<dbReference type="SMR" id="Q62MM4"/>
<dbReference type="KEGG" id="bma:BMA0209"/>
<dbReference type="PATRIC" id="fig|243160.12.peg.209"/>
<dbReference type="eggNOG" id="COG0760">
    <property type="taxonomic scope" value="Bacteria"/>
</dbReference>
<dbReference type="HOGENOM" id="CLU_034646_11_0_4"/>
<dbReference type="Proteomes" id="UP000006693">
    <property type="component" value="Chromosome 1"/>
</dbReference>
<dbReference type="GO" id="GO:0030288">
    <property type="term" value="C:outer membrane-bounded periplasmic space"/>
    <property type="evidence" value="ECO:0007669"/>
    <property type="project" value="InterPro"/>
</dbReference>
<dbReference type="GO" id="GO:0042277">
    <property type="term" value="F:peptide binding"/>
    <property type="evidence" value="ECO:0007669"/>
    <property type="project" value="InterPro"/>
</dbReference>
<dbReference type="GO" id="GO:0003755">
    <property type="term" value="F:peptidyl-prolyl cis-trans isomerase activity"/>
    <property type="evidence" value="ECO:0007669"/>
    <property type="project" value="UniProtKB-UniRule"/>
</dbReference>
<dbReference type="GO" id="GO:0051082">
    <property type="term" value="F:unfolded protein binding"/>
    <property type="evidence" value="ECO:0007669"/>
    <property type="project" value="UniProtKB-UniRule"/>
</dbReference>
<dbReference type="GO" id="GO:0043165">
    <property type="term" value="P:Gram-negative-bacterium-type cell outer membrane assembly"/>
    <property type="evidence" value="ECO:0007669"/>
    <property type="project" value="InterPro"/>
</dbReference>
<dbReference type="GO" id="GO:0006457">
    <property type="term" value="P:protein folding"/>
    <property type="evidence" value="ECO:0007669"/>
    <property type="project" value="UniProtKB-UniRule"/>
</dbReference>
<dbReference type="GO" id="GO:0050821">
    <property type="term" value="P:protein stabilization"/>
    <property type="evidence" value="ECO:0007669"/>
    <property type="project" value="InterPro"/>
</dbReference>
<dbReference type="Gene3D" id="3.10.50.40">
    <property type="match status" value="2"/>
</dbReference>
<dbReference type="Gene3D" id="1.10.4030.10">
    <property type="entry name" value="Porin chaperone SurA, peptide-binding domain"/>
    <property type="match status" value="1"/>
</dbReference>
<dbReference type="HAMAP" id="MF_01183">
    <property type="entry name" value="Chaperone_SurA"/>
    <property type="match status" value="1"/>
</dbReference>
<dbReference type="InterPro" id="IPR050280">
    <property type="entry name" value="OMP_Chaperone_SurA"/>
</dbReference>
<dbReference type="InterPro" id="IPR046357">
    <property type="entry name" value="PPIase_dom_sf"/>
</dbReference>
<dbReference type="InterPro" id="IPR000297">
    <property type="entry name" value="PPIase_PpiC"/>
</dbReference>
<dbReference type="InterPro" id="IPR023034">
    <property type="entry name" value="PPIase_SurA"/>
</dbReference>
<dbReference type="InterPro" id="IPR015391">
    <property type="entry name" value="SurA_N"/>
</dbReference>
<dbReference type="InterPro" id="IPR027304">
    <property type="entry name" value="Trigger_fact/SurA_dom_sf"/>
</dbReference>
<dbReference type="PANTHER" id="PTHR47637">
    <property type="entry name" value="CHAPERONE SURA"/>
    <property type="match status" value="1"/>
</dbReference>
<dbReference type="PANTHER" id="PTHR47637:SF1">
    <property type="entry name" value="CHAPERONE SURA"/>
    <property type="match status" value="1"/>
</dbReference>
<dbReference type="Pfam" id="PF00639">
    <property type="entry name" value="Rotamase"/>
    <property type="match status" value="1"/>
</dbReference>
<dbReference type="Pfam" id="PF13616">
    <property type="entry name" value="Rotamase_3"/>
    <property type="match status" value="1"/>
</dbReference>
<dbReference type="Pfam" id="PF09312">
    <property type="entry name" value="SurA_N"/>
    <property type="match status" value="1"/>
</dbReference>
<dbReference type="SUPFAM" id="SSF54534">
    <property type="entry name" value="FKBP-like"/>
    <property type="match status" value="2"/>
</dbReference>
<dbReference type="SUPFAM" id="SSF109998">
    <property type="entry name" value="Triger factor/SurA peptide-binding domain-like"/>
    <property type="match status" value="1"/>
</dbReference>
<dbReference type="PROSITE" id="PS50198">
    <property type="entry name" value="PPIC_PPIASE_2"/>
    <property type="match status" value="2"/>
</dbReference>
<evidence type="ECO:0000255" key="1">
    <source>
        <dbReference type="HAMAP-Rule" id="MF_01183"/>
    </source>
</evidence>
<proteinExistence type="inferred from homology"/>
<sequence>MKKTLRFAAVASGLVASLITVAPSASAQALRAQGASLADEVVAVVNNDVITGRELDQRVGLIARRLQQQKAPVPPTDQLRAQVLNQMVLERIQVQRAKDDGIVVDNATVQATLGRLAQANGMQLDQYKARIEAQGVPWDLFVRDARTELMLSKLREKEVDSKITVSDAEVASYIASQRGPNAGSQQDLRLEHIFVKAPANAPQADIDVAQKKAEGLLQQALASGANFERLAKNQSEADDAKKGGDLGFKSPASLPSDVVDAVSKLRPGEVNPTLIRVPDGFEIVRLVERRASQNPAASPKIVQTHVRHILLRVGEGKSESQARQQLIDIRRQIESGGDFEKFARTYSQDGSASQGGDLGWISPGEPVPEFERAMNTLQDGQVSNPVRTEYGYHLIQVLGRRDAEGSVQQQMDIARQAIGQRKAEQAYSDWLRELRDSSYVQIKLPVAQ</sequence>
<protein>
    <recommendedName>
        <fullName evidence="1">Chaperone SurA</fullName>
    </recommendedName>
    <alternativeName>
        <fullName evidence="1">Peptidyl-prolyl cis-trans isomerase SurA</fullName>
        <shortName evidence="1">PPIase SurA</shortName>
        <ecNumber evidence="1">5.2.1.8</ecNumber>
    </alternativeName>
    <alternativeName>
        <fullName evidence="1">Rotamase SurA</fullName>
    </alternativeName>
</protein>
<keyword id="KW-0143">Chaperone</keyword>
<keyword id="KW-0413">Isomerase</keyword>
<keyword id="KW-0574">Periplasm</keyword>
<keyword id="KW-1185">Reference proteome</keyword>
<keyword id="KW-0677">Repeat</keyword>
<keyword id="KW-0697">Rotamase</keyword>
<keyword id="KW-0732">Signal</keyword>
<accession>Q62MM4</accession>
<reference key="1">
    <citation type="journal article" date="2004" name="Proc. Natl. Acad. Sci. U.S.A.">
        <title>Structural flexibility in the Burkholderia mallei genome.</title>
        <authorList>
            <person name="Nierman W.C."/>
            <person name="DeShazer D."/>
            <person name="Kim H.S."/>
            <person name="Tettelin H."/>
            <person name="Nelson K.E."/>
            <person name="Feldblyum T.V."/>
            <person name="Ulrich R.L."/>
            <person name="Ronning C.M."/>
            <person name="Brinkac L.M."/>
            <person name="Daugherty S.C."/>
            <person name="Davidsen T.D."/>
            <person name="DeBoy R.T."/>
            <person name="Dimitrov G."/>
            <person name="Dodson R.J."/>
            <person name="Durkin A.S."/>
            <person name="Gwinn M.L."/>
            <person name="Haft D.H."/>
            <person name="Khouri H.M."/>
            <person name="Kolonay J.F."/>
            <person name="Madupu R."/>
            <person name="Mohammoud Y."/>
            <person name="Nelson W.C."/>
            <person name="Radune D."/>
            <person name="Romero C.M."/>
            <person name="Sarria S."/>
            <person name="Selengut J."/>
            <person name="Shamblin C."/>
            <person name="Sullivan S.A."/>
            <person name="White O."/>
            <person name="Yu Y."/>
            <person name="Zafar N."/>
            <person name="Zhou L."/>
            <person name="Fraser C.M."/>
        </authorList>
    </citation>
    <scope>NUCLEOTIDE SEQUENCE [LARGE SCALE GENOMIC DNA]</scope>
    <source>
        <strain>ATCC 23344</strain>
    </source>
</reference>
<name>SURA_BURMA</name>
<gene>
    <name evidence="1" type="primary">surA</name>
    <name type="ordered locus">BMA0209</name>
</gene>